<accession>P37462</accession>
<evidence type="ECO:0000250" key="1"/>
<evidence type="ECO:0000255" key="2">
    <source>
        <dbReference type="PROSITE-ProRule" id="PRU00805"/>
    </source>
</evidence>
<evidence type="ECO:0000305" key="3"/>
<organism>
    <name type="scientific">Salmonella typhimurium (strain LT2 / SGSC1412 / ATCC 700720)</name>
    <dbReference type="NCBI Taxonomy" id="99287"/>
    <lineage>
        <taxon>Bacteria</taxon>
        <taxon>Pseudomonadati</taxon>
        <taxon>Pseudomonadota</taxon>
        <taxon>Gammaproteobacteria</taxon>
        <taxon>Enterobacterales</taxon>
        <taxon>Enterobacteriaceae</taxon>
        <taxon>Salmonella</taxon>
    </lineage>
</organism>
<dbReference type="EC" id="1.14.11.33"/>
<dbReference type="EMBL" id="AE006468">
    <property type="protein sequence ID" value="AAL21166.1"/>
    <property type="molecule type" value="Genomic_DNA"/>
</dbReference>
<dbReference type="EMBL" id="D90221">
    <property type="status" value="NOT_ANNOTATED_CDS"/>
    <property type="molecule type" value="Genomic_DNA"/>
</dbReference>
<dbReference type="PIR" id="B39433">
    <property type="entry name" value="B39433"/>
</dbReference>
<dbReference type="RefSeq" id="NP_461207.1">
    <property type="nucleotide sequence ID" value="NC_003197.2"/>
</dbReference>
<dbReference type="RefSeq" id="WP_000884990.1">
    <property type="nucleotide sequence ID" value="NC_003197.2"/>
</dbReference>
<dbReference type="SMR" id="P37462"/>
<dbReference type="STRING" id="99287.STM2264"/>
<dbReference type="PaxDb" id="99287-STM2264"/>
<dbReference type="GeneID" id="1253786"/>
<dbReference type="KEGG" id="stm:STM2264"/>
<dbReference type="PATRIC" id="fig|99287.12.peg.2398"/>
<dbReference type="HOGENOM" id="CLU_039677_1_1_6"/>
<dbReference type="OMA" id="CLINRYQ"/>
<dbReference type="PhylomeDB" id="P37462"/>
<dbReference type="BioCyc" id="SENT99287:STM2264-MONOMER"/>
<dbReference type="Proteomes" id="UP000001014">
    <property type="component" value="Chromosome"/>
</dbReference>
<dbReference type="GO" id="GO:0005737">
    <property type="term" value="C:cytoplasm"/>
    <property type="evidence" value="ECO:0000318"/>
    <property type="project" value="GO_Central"/>
</dbReference>
<dbReference type="GO" id="GO:0035516">
    <property type="term" value="F:broad specificity oxidative DNA demethylase activity"/>
    <property type="evidence" value="ECO:0000250"/>
    <property type="project" value="UniProtKB"/>
</dbReference>
<dbReference type="GO" id="GO:0008198">
    <property type="term" value="F:ferrous iron binding"/>
    <property type="evidence" value="ECO:0000318"/>
    <property type="project" value="GO_Central"/>
</dbReference>
<dbReference type="GO" id="GO:0035515">
    <property type="term" value="F:oxidative RNA demethylase activity"/>
    <property type="evidence" value="ECO:0000318"/>
    <property type="project" value="GO_Central"/>
</dbReference>
<dbReference type="GO" id="GO:0006307">
    <property type="term" value="P:DNA alkylation repair"/>
    <property type="evidence" value="ECO:0000250"/>
    <property type="project" value="UniProtKB"/>
</dbReference>
<dbReference type="GO" id="GO:0035513">
    <property type="term" value="P:oxidative RNA demethylation"/>
    <property type="evidence" value="ECO:0000318"/>
    <property type="project" value="GO_Central"/>
</dbReference>
<dbReference type="GO" id="GO:0042245">
    <property type="term" value="P:RNA repair"/>
    <property type="evidence" value="ECO:0000250"/>
    <property type="project" value="UniProtKB"/>
</dbReference>
<dbReference type="FunFam" id="2.60.120.590:FF:000005">
    <property type="entry name" value="Alpha-ketoglutarate-dependent dioxygenase AlkB"/>
    <property type="match status" value="1"/>
</dbReference>
<dbReference type="Gene3D" id="2.60.120.590">
    <property type="entry name" value="Alpha-ketoglutarate-dependent dioxygenase AlkB-like"/>
    <property type="match status" value="1"/>
</dbReference>
<dbReference type="InterPro" id="IPR004574">
    <property type="entry name" value="Alkb"/>
</dbReference>
<dbReference type="InterPro" id="IPR027450">
    <property type="entry name" value="AlkB-like"/>
</dbReference>
<dbReference type="InterPro" id="IPR037151">
    <property type="entry name" value="AlkB-like_sf"/>
</dbReference>
<dbReference type="InterPro" id="IPR005123">
    <property type="entry name" value="Oxoglu/Fe-dep_dioxygenase_dom"/>
</dbReference>
<dbReference type="NCBIfam" id="NF011930">
    <property type="entry name" value="PRK15401.1"/>
    <property type="match status" value="1"/>
</dbReference>
<dbReference type="PANTHER" id="PTHR16557">
    <property type="entry name" value="ALKYLATED DNA REPAIR PROTEIN ALKB-RELATED"/>
    <property type="match status" value="1"/>
</dbReference>
<dbReference type="PANTHER" id="PTHR16557:SF2">
    <property type="entry name" value="NUCLEIC ACID DIOXYGENASE ALKBH1"/>
    <property type="match status" value="1"/>
</dbReference>
<dbReference type="Pfam" id="PF13532">
    <property type="entry name" value="2OG-FeII_Oxy_2"/>
    <property type="match status" value="1"/>
</dbReference>
<dbReference type="SUPFAM" id="SSF51197">
    <property type="entry name" value="Clavaminate synthase-like"/>
    <property type="match status" value="1"/>
</dbReference>
<dbReference type="PROSITE" id="PS51471">
    <property type="entry name" value="FE2OG_OXY"/>
    <property type="match status" value="1"/>
</dbReference>
<reference key="1">
    <citation type="journal article" date="2001" name="Nature">
        <title>Complete genome sequence of Salmonella enterica serovar Typhimurium LT2.</title>
        <authorList>
            <person name="McClelland M."/>
            <person name="Sanderson K.E."/>
            <person name="Spieth J."/>
            <person name="Clifton S.W."/>
            <person name="Latreille P."/>
            <person name="Courtney L."/>
            <person name="Porwollik S."/>
            <person name="Ali J."/>
            <person name="Dante M."/>
            <person name="Du F."/>
            <person name="Hou S."/>
            <person name="Layman D."/>
            <person name="Leonard S."/>
            <person name="Nguyen C."/>
            <person name="Scott K."/>
            <person name="Holmes A."/>
            <person name="Grewal N."/>
            <person name="Mulvaney E."/>
            <person name="Ryan E."/>
            <person name="Sun H."/>
            <person name="Florea L."/>
            <person name="Miller W."/>
            <person name="Stoneking T."/>
            <person name="Nhan M."/>
            <person name="Waterston R."/>
            <person name="Wilson R.K."/>
        </authorList>
    </citation>
    <scope>NUCLEOTIDE SEQUENCE [LARGE SCALE GENOMIC DNA]</scope>
    <source>
        <strain>LT2 / SGSC1412 / ATCC 700720</strain>
    </source>
</reference>
<reference key="2">
    <citation type="journal article" date="1991" name="J. Bacteriol.">
        <title>Cloning and characterization of the Salmonella typhimurium ada gene, which encodes O6-methylguanine-DNA methyltransferase.</title>
        <authorList>
            <person name="Hakura A."/>
            <person name="Morimoto K."/>
            <person name="Sofuni T."/>
            <person name="Nohmi T."/>
        </authorList>
    </citation>
    <scope>NUCLEOTIDE SEQUENCE [GENOMIC DNA] OF 1-24</scope>
</reference>
<proteinExistence type="inferred from homology"/>
<comment type="function">
    <text evidence="1">Dioxygenase that repairs alkylated DNA and RNA containing 3-methylcytosine or 1-methyladenine by oxidative demethylation. Has highest activity towards 3-methylcytosine. Has lower activity towards alkylated DNA containing ethenoadenine, and no detectable activity towards 1-methylguanine or 3-methylthymine. Accepts double-stranded and single-stranded substrates. Requires molecular oxygen, alpha-ketoglutarate and iron. Provides extensive resistance to alkylating agents such as MMS and DMS (SN2 agents), but not to MMNG and MNU (SN1 agents) (By similarity).</text>
</comment>
<comment type="catalytic activity">
    <reaction>
        <text>a methylated nucleobase within DNA + 2-oxoglutarate + O2 = a nucleobase within DNA + formaldehyde + succinate + CO2</text>
        <dbReference type="Rhea" id="RHEA:30299"/>
        <dbReference type="Rhea" id="RHEA-COMP:12192"/>
        <dbReference type="Rhea" id="RHEA-COMP:12193"/>
        <dbReference type="ChEBI" id="CHEBI:15379"/>
        <dbReference type="ChEBI" id="CHEBI:16526"/>
        <dbReference type="ChEBI" id="CHEBI:16810"/>
        <dbReference type="ChEBI" id="CHEBI:16842"/>
        <dbReference type="ChEBI" id="CHEBI:30031"/>
        <dbReference type="ChEBI" id="CHEBI:32875"/>
        <dbReference type="ChEBI" id="CHEBI:64428"/>
        <dbReference type="EC" id="1.14.11.33"/>
    </reaction>
</comment>
<comment type="cofactor">
    <cofactor evidence="2">
        <name>Fe(2+)</name>
        <dbReference type="ChEBI" id="CHEBI:29033"/>
    </cofactor>
    <text evidence="2">Binds 1 Fe(2+) ion per subunit.</text>
</comment>
<comment type="similarity">
    <text evidence="3">Belongs to the alkB family.</text>
</comment>
<name>ALKB_SALTY</name>
<sequence>MLDLFADEAPWQEPLAPGAVVLRRFAFRAAQSLLDDIGFVASQSPFRQMVTPGGYTMSVAMTNCGALGWTTDRHGYCYAVRDPLTDKPWPALPLSFASVCRQAAIAAGYASFQPDACLINRYAPGAKLSLHQDKDEPDLRAPIVSVSLGVPAVFQFGGLRRSDPIQRILLEHGDIVVWGGESRLFYHGIQPLKAGFHPMTGEFRYNLTFRQAAEKE</sequence>
<protein>
    <recommendedName>
        <fullName>Alpha-ketoglutarate-dependent dioxygenase AlkB</fullName>
        <ecNumber>1.14.11.33</ecNumber>
    </recommendedName>
    <alternativeName>
        <fullName>Alkylated DNA repair protein AlkB</fullName>
    </alternativeName>
    <alternativeName>
        <fullName>DNA oxidative demethylase AlkB</fullName>
    </alternativeName>
</protein>
<feature type="chain" id="PRO_0000066666" description="Alpha-ketoglutarate-dependent dioxygenase AlkB">
    <location>
        <begin position="1"/>
        <end position="216"/>
    </location>
</feature>
<feature type="domain" description="Fe2OG dioxygenase" evidence="2">
    <location>
        <begin position="113"/>
        <end position="213"/>
    </location>
</feature>
<feature type="binding site" evidence="1">
    <location>
        <position position="69"/>
    </location>
    <ligand>
        <name>substrate</name>
    </ligand>
</feature>
<feature type="binding site" evidence="1">
    <location>
        <begin position="76"/>
        <end position="78"/>
    </location>
    <ligand>
        <name>substrate</name>
    </ligand>
</feature>
<feature type="binding site" evidence="1">
    <location>
        <begin position="120"/>
        <end position="122"/>
    </location>
    <ligand>
        <name>2-oxoglutarate</name>
        <dbReference type="ChEBI" id="CHEBI:16810"/>
    </ligand>
</feature>
<feature type="binding site" evidence="2">
    <location>
        <position position="131"/>
    </location>
    <ligand>
        <name>Fe cation</name>
        <dbReference type="ChEBI" id="CHEBI:24875"/>
        <note>catalytic</note>
    </ligand>
</feature>
<feature type="binding site" evidence="2">
    <location>
        <position position="133"/>
    </location>
    <ligand>
        <name>Fe cation</name>
        <dbReference type="ChEBI" id="CHEBI:24875"/>
        <note>catalytic</note>
    </ligand>
</feature>
<feature type="binding site" evidence="1">
    <location>
        <position position="135"/>
    </location>
    <ligand>
        <name>substrate</name>
    </ligand>
</feature>
<feature type="binding site" evidence="1">
    <location>
        <position position="161"/>
    </location>
    <ligand>
        <name>substrate</name>
    </ligand>
</feature>
<feature type="binding site" evidence="2">
    <location>
        <position position="187"/>
    </location>
    <ligand>
        <name>Fe cation</name>
        <dbReference type="ChEBI" id="CHEBI:24875"/>
        <note>catalytic</note>
    </ligand>
</feature>
<feature type="binding site" evidence="1">
    <location>
        <begin position="204"/>
        <end position="210"/>
    </location>
    <ligand>
        <name>2-oxoglutarate</name>
        <dbReference type="ChEBI" id="CHEBI:16810"/>
    </ligand>
</feature>
<feature type="sequence conflict" description="In Ref. 2; D90221." evidence="3" ref="2">
    <original>A</original>
    <variation>R</variation>
    <location>
        <position position="19"/>
    </location>
</feature>
<keyword id="KW-0223">Dioxygenase</keyword>
<keyword id="KW-0227">DNA damage</keyword>
<keyword id="KW-0234">DNA repair</keyword>
<keyword id="KW-0408">Iron</keyword>
<keyword id="KW-0479">Metal-binding</keyword>
<keyword id="KW-0560">Oxidoreductase</keyword>
<keyword id="KW-1185">Reference proteome</keyword>
<gene>
    <name type="primary">alkB</name>
    <name type="ordered locus">STM2264</name>
</gene>